<organism>
    <name type="scientific">Homo sapiens</name>
    <name type="common">Human</name>
    <dbReference type="NCBI Taxonomy" id="9606"/>
    <lineage>
        <taxon>Eukaryota</taxon>
        <taxon>Metazoa</taxon>
        <taxon>Chordata</taxon>
        <taxon>Craniata</taxon>
        <taxon>Vertebrata</taxon>
        <taxon>Euteleostomi</taxon>
        <taxon>Mammalia</taxon>
        <taxon>Eutheria</taxon>
        <taxon>Euarchontoglires</taxon>
        <taxon>Primates</taxon>
        <taxon>Haplorrhini</taxon>
        <taxon>Catarrhini</taxon>
        <taxon>Hominidae</taxon>
        <taxon>Homo</taxon>
    </lineage>
</organism>
<feature type="propeptide" id="PRO_0000033477" evidence="14">
    <location>
        <begin position="1"/>
        <end position="23"/>
    </location>
</feature>
<feature type="chain" id="PRO_0000033478" description="Surfactant protein C">
    <location>
        <begin position="24"/>
        <end position="58"/>
    </location>
</feature>
<feature type="propeptide" id="PRO_0000033479">
    <location>
        <begin position="59"/>
        <end position="197"/>
    </location>
</feature>
<feature type="domain" description="BRICHOS" evidence="1">
    <location>
        <begin position="94"/>
        <end position="197"/>
    </location>
</feature>
<feature type="lipid moiety-binding region" description="S-palmitoyl cysteine" evidence="11">
    <location>
        <position position="28"/>
    </location>
</feature>
<feature type="lipid moiety-binding region" description="S-palmitoyl cysteine" evidence="11">
    <location>
        <position position="29"/>
    </location>
</feature>
<feature type="disulfide bond" evidence="10">
    <location>
        <begin position="120"/>
        <end position="148"/>
    </location>
</feature>
<feature type="disulfide bond" evidence="10">
    <location>
        <begin position="121"/>
        <end position="189"/>
    </location>
</feature>
<feature type="splice variant" id="VSP_006311" description="In isoform 2." evidence="17">
    <location>
        <begin position="146"/>
        <end position="151"/>
    </location>
</feature>
<feature type="sequence variant" id="VAR_036855" description="In SMDP2; targeted abnormally to early endosomes and likely to result in a toxic gain of function; dbSNP:rs121917836." evidence="7">
    <original>E</original>
    <variation>K</variation>
    <location>
        <position position="66"/>
    </location>
</feature>
<feature type="sequence variant" id="VAR_026753" description="In SMDP2; abnormal trafficking and accumulation of aberrantly processed proSPC within alveoli; dbSNP:rs121917834." evidence="4 5 8">
    <original>I</original>
    <variation>T</variation>
    <location>
        <position position="73"/>
    </location>
</feature>
<feature type="sequence variant" id="VAR_026754" description="In SMDP2; dbSNP:rs121918559." evidence="9">
    <original>A</original>
    <variation>D</variation>
    <location>
        <position position="116"/>
    </location>
</feature>
<feature type="sequence variant" id="VAR_007453" description="In dbSNP:rs4715." evidence="3 6 13 15 16">
    <original>T</original>
    <variation>N</variation>
    <location>
        <position position="138"/>
    </location>
</feature>
<feature type="sequence variant" id="VAR_026755" description="In SMDP2; dbSNP:rs34957318." evidence="4">
    <original>R</original>
    <variation>Q</variation>
    <location>
        <position position="167"/>
    </location>
</feature>
<feature type="sequence variant" id="VAR_016175" description="In dbSNP:rs1124." evidence="3 6 12 13 15 16">
    <original>S</original>
    <variation>N</variation>
    <location>
        <position position="186"/>
    </location>
</feature>
<feature type="sequence variant" id="VAR_026756" description="In SMDP2; dbSNP:rs121917835." evidence="2">
    <original>L</original>
    <variation>Q</variation>
    <location>
        <position position="188"/>
    </location>
</feature>
<feature type="sequence conflict" description="In Ref. 4; AAB60332." evidence="18" ref="4">
    <original>P</original>
    <variation>PPCQ</variation>
    <location>
        <position position="14"/>
    </location>
</feature>
<feature type="sequence conflict" description="In Ref. 4; AAB60332." evidence="18" ref="4">
    <original>L</original>
    <variation>S</variation>
    <location>
        <position position="45"/>
    </location>
</feature>
<feature type="sequence conflict" description="In Ref. 4; AAB60332." evidence="18" ref="4">
    <original>TEM</original>
    <variation>FPQ</variation>
    <location>
        <begin position="65"/>
        <end position="67"/>
    </location>
</feature>
<feature type="strand" evidence="20">
    <location>
        <begin position="91"/>
        <end position="96"/>
    </location>
</feature>
<feature type="turn" evidence="20">
    <location>
        <begin position="97"/>
        <end position="99"/>
    </location>
</feature>
<feature type="strand" evidence="20">
    <location>
        <begin position="100"/>
        <end position="105"/>
    </location>
</feature>
<feature type="turn" evidence="20">
    <location>
        <begin position="106"/>
        <end position="109"/>
    </location>
</feature>
<feature type="strand" evidence="20">
    <location>
        <begin position="110"/>
        <end position="116"/>
    </location>
</feature>
<feature type="strand" evidence="20">
    <location>
        <begin position="121"/>
        <end position="125"/>
    </location>
</feature>
<feature type="helix" evidence="20">
    <location>
        <begin position="134"/>
        <end position="143"/>
    </location>
</feature>
<feature type="turn" evidence="22">
    <location>
        <begin position="147"/>
        <end position="149"/>
    </location>
</feature>
<feature type="strand" evidence="22">
    <location>
        <begin position="152"/>
        <end position="155"/>
    </location>
</feature>
<feature type="strand" evidence="22">
    <location>
        <begin position="158"/>
        <end position="160"/>
    </location>
</feature>
<feature type="strand" evidence="21">
    <location>
        <begin position="165"/>
        <end position="167"/>
    </location>
</feature>
<feature type="strand" evidence="21">
    <location>
        <begin position="171"/>
        <end position="173"/>
    </location>
</feature>
<feature type="helix" evidence="22">
    <location>
        <begin position="174"/>
        <end position="176"/>
    </location>
</feature>
<feature type="helix" evidence="20">
    <location>
        <begin position="183"/>
        <end position="189"/>
    </location>
</feature>
<feature type="strand" evidence="20">
    <location>
        <begin position="194"/>
        <end position="197"/>
    </location>
</feature>
<comment type="function">
    <text>Pulmonary surfactant associated proteins promote alveolar stability by lowering the surface tension at the air-liquid interface in the peripheral air spaces.</text>
</comment>
<comment type="interaction">
    <interactant intactId="EBI-10197617">
        <id>P11686</id>
    </interactant>
    <interactant intactId="EBI-11532900">
        <id>J3KQ12</id>
        <label>BSCL2</label>
    </interactant>
    <organismsDiffer>false</organismsDiffer>
    <experiments>3</experiments>
</comment>
<comment type="interaction">
    <interactant intactId="EBI-10197617">
        <id>P11686</id>
    </interactant>
    <interactant intactId="EBI-12824513">
        <id>Q8TD46-4</id>
        <label>CD200R1</label>
    </interactant>
    <organismsDiffer>false</organismsDiffer>
    <experiments>3</experiments>
</comment>
<comment type="interaction">
    <interactant intactId="EBI-10197617">
        <id>P11686</id>
    </interactant>
    <interactant intactId="EBI-7797864">
        <id>P11912</id>
        <label>CD79A</label>
    </interactant>
    <organismsDiffer>false</organismsDiffer>
    <experiments>3</experiments>
</comment>
<comment type="interaction">
    <interactant intactId="EBI-10197617">
        <id>P11686</id>
    </interactant>
    <interactant intactId="EBI-18400628">
        <id>O00501</id>
        <label>CLDN5</label>
    </interactant>
    <organismsDiffer>false</organismsDiffer>
    <experiments>3</experiments>
</comment>
<comment type="interaction">
    <interactant intactId="EBI-10197617">
        <id>P11686</id>
    </interactant>
    <interactant intactId="EBI-18013275">
        <id>Q7Z7G2</id>
        <label>CPLX4</label>
    </interactant>
    <organismsDiffer>false</organismsDiffer>
    <experiments>3</experiments>
</comment>
<comment type="interaction">
    <interactant intactId="EBI-10197617">
        <id>P11686</id>
    </interactant>
    <interactant intactId="EBI-625022">
        <id>O43889-2</id>
        <label>CREB3</label>
    </interactant>
    <organismsDiffer>false</organismsDiffer>
    <experiments>3</experiments>
</comment>
<comment type="interaction">
    <interactant intactId="EBI-10197617">
        <id>P11686</id>
    </interactant>
    <interactant intactId="EBI-3911467">
        <id>Q07325</id>
        <label>CXCL9</label>
    </interactant>
    <organismsDiffer>false</organismsDiffer>
    <experiments>7</experiments>
</comment>
<comment type="interaction">
    <interactant intactId="EBI-10197617">
        <id>P11686</id>
    </interactant>
    <interactant intactId="EBI-18304435">
        <id>Q5JX71</id>
        <label>FAM209A</label>
    </interactant>
    <organismsDiffer>false</organismsDiffer>
    <experiments>3</experiments>
</comment>
<comment type="interaction">
    <interactant intactId="EBI-10197617">
        <id>P11686</id>
    </interactant>
    <interactant intactId="EBI-12142257">
        <id>Q8TBE3</id>
        <label>FNDC9</label>
    </interactant>
    <organismsDiffer>false</organismsDiffer>
    <experiments>3</experiments>
</comment>
<comment type="interaction">
    <interactant intactId="EBI-10197617">
        <id>P11686</id>
    </interactant>
    <interactant intactId="EBI-17458373">
        <id>P48165</id>
        <label>GJA8</label>
    </interactant>
    <organismsDiffer>false</organismsDiffer>
    <experiments>3</experiments>
</comment>
<comment type="interaction">
    <interactant intactId="EBI-10197617">
        <id>P11686</id>
    </interactant>
    <interactant intactId="EBI-712073">
        <id>Q8NBJ4</id>
        <label>GOLM1</label>
    </interactant>
    <organismsDiffer>false</organismsDiffer>
    <experiments>3</experiments>
</comment>
<comment type="interaction">
    <interactant intactId="EBI-10197617">
        <id>P11686</id>
    </interactant>
    <interactant intactId="EBI-13345167">
        <id>Q8TDT2</id>
        <label>GPR152</label>
    </interactant>
    <organismsDiffer>false</organismsDiffer>
    <experiments>3</experiments>
</comment>
<comment type="interaction">
    <interactant intactId="EBI-10197617">
        <id>P11686</id>
    </interactant>
    <interactant intactId="EBI-11721746">
        <id>Q8TED1</id>
        <label>GPX8</label>
    </interactant>
    <organismsDiffer>false</organismsDiffer>
    <experiments>4</experiments>
</comment>
<comment type="interaction">
    <interactant intactId="EBI-10197617">
        <id>P11686</id>
    </interactant>
    <interactant intactId="EBI-12816745">
        <id>P05981</id>
        <label>HPN</label>
    </interactant>
    <organismsDiffer>false</organismsDiffer>
    <experiments>3</experiments>
</comment>
<comment type="interaction">
    <interactant intactId="EBI-10197617">
        <id>P11686</id>
    </interactant>
    <interactant intactId="EBI-725421">
        <id>P32942</id>
        <label>ICAM3</label>
    </interactant>
    <organismsDiffer>false</organismsDiffer>
    <experiments>3</experiments>
</comment>
<comment type="interaction">
    <interactant intactId="EBI-10197617">
        <id>P11686</id>
    </interactant>
    <interactant intactId="EBI-3905457">
        <id>P38484</id>
        <label>IFNGR2</label>
    </interactant>
    <organismsDiffer>false</organismsDiffer>
    <experiments>3</experiments>
</comment>
<comment type="interaction">
    <interactant intactId="EBI-10197617">
        <id>P11686</id>
    </interactant>
    <interactant intactId="EBI-9018187">
        <id>P26715</id>
        <label>KLRC1</label>
    </interactant>
    <organismsDiffer>false</organismsDiffer>
    <experiments>3</experiments>
</comment>
<comment type="interaction">
    <interactant intactId="EBI-10197617">
        <id>P11686</id>
    </interactant>
    <interactant intactId="EBI-10264855">
        <id>Q8N112</id>
        <label>LSMEM2</label>
    </interactant>
    <organismsDiffer>false</organismsDiffer>
    <experiments>3</experiments>
</comment>
<comment type="interaction">
    <interactant intactId="EBI-10197617">
        <id>P11686</id>
    </interactant>
    <interactant intactId="EBI-17263240">
        <id>P15941-11</id>
        <label>MUC1</label>
    </interactant>
    <organismsDiffer>false</organismsDiffer>
    <experiments>3</experiments>
</comment>
<comment type="interaction">
    <interactant intactId="EBI-10197617">
        <id>P11686</id>
    </interactant>
    <interactant intactId="EBI-716063">
        <id>Q13113</id>
        <label>PDZK1IP1</label>
    </interactant>
    <organismsDiffer>false</organismsDiffer>
    <experiments>3</experiments>
</comment>
<comment type="interaction">
    <interactant intactId="EBI-10197617">
        <id>P11686</id>
    </interactant>
    <interactant intactId="EBI-3919694">
        <id>P15151</id>
        <label>PVR</label>
    </interactant>
    <organismsDiffer>false</organismsDiffer>
    <experiments>4</experiments>
</comment>
<comment type="interaction">
    <interactant intactId="EBI-10197617">
        <id>P11686</id>
    </interactant>
    <interactant intactId="EBI-8652744">
        <id>Q96IW7</id>
        <label>SEC22A</label>
    </interactant>
    <organismsDiffer>false</organismsDiffer>
    <experiments>6</experiments>
</comment>
<comment type="interaction">
    <interactant intactId="EBI-10197617">
        <id>P11686</id>
    </interactant>
    <interactant intactId="EBI-4402709">
        <id>P60059</id>
        <label>SEC61G</label>
    </interactant>
    <organismsDiffer>false</organismsDiffer>
    <experiments>3</experiments>
</comment>
<comment type="interaction">
    <interactant intactId="EBI-10197617">
        <id>P11686</id>
    </interactant>
    <interactant intactId="EBI-10197617">
        <id>P11686</id>
        <label>SFTPC</label>
    </interactant>
    <organismsDiffer>false</organismsDiffer>
    <experiments>8</experiments>
</comment>
<comment type="interaction">
    <interactant intactId="EBI-10197617">
        <id>P11686</id>
    </interactant>
    <interactant intactId="EBI-12857926">
        <id>Q9Y336</id>
        <label>SIGLEC9</label>
    </interactant>
    <organismsDiffer>false</organismsDiffer>
    <experiments>3</experiments>
</comment>
<comment type="interaction">
    <interactant intactId="EBI-10197617">
        <id>P11686</id>
    </interactant>
    <interactant intactId="EBI-741850">
        <id>Q9BZL3</id>
        <label>SMIM3</label>
    </interactant>
    <organismsDiffer>false</organismsDiffer>
    <experiments>4</experiments>
</comment>
<comment type="interaction">
    <interactant intactId="EBI-10197617">
        <id>P11686</id>
    </interactant>
    <interactant intactId="EBI-7131783">
        <id>Q8N205</id>
        <label>SYNE4</label>
    </interactant>
    <organismsDiffer>false</organismsDiffer>
    <experiments>3</experiments>
</comment>
<comment type="interaction">
    <interactant intactId="EBI-10197617">
        <id>P11686</id>
    </interactant>
    <interactant intactId="EBI-12099160">
        <id>Q8N205-2</id>
        <label>SYNE4</label>
    </interactant>
    <organismsDiffer>false</organismsDiffer>
    <experiments>4</experiments>
</comment>
<comment type="interaction">
    <interactant intactId="EBI-10197617">
        <id>P11686</id>
    </interactant>
    <interactant intactId="EBI-2821497">
        <id>Q9BVX2</id>
        <label>TMEM106C</label>
    </interactant>
    <organismsDiffer>false</organismsDiffer>
    <experiments>3</experiments>
</comment>
<comment type="interaction">
    <interactant intactId="EBI-10197617">
        <id>P11686</id>
    </interactant>
    <interactant intactId="EBI-7238458">
        <id>Q8IV31</id>
        <label>TMEM139</label>
    </interactant>
    <organismsDiffer>false</organismsDiffer>
    <experiments>3</experiments>
</comment>
<comment type="interaction">
    <interactant intactId="EBI-10197617">
        <id>P11686</id>
    </interactant>
    <interactant intactId="EBI-9527107">
        <id>Q3MIR4</id>
        <label>TMEM30B</label>
    </interactant>
    <organismsDiffer>false</organismsDiffer>
    <experiments>3</experiments>
</comment>
<comment type="interaction">
    <interactant intactId="EBI-10197617">
        <id>P11686</id>
    </interactant>
    <interactant intactId="EBI-8649725">
        <id>Q9BSE2</id>
        <label>TMEM79</label>
    </interactant>
    <organismsDiffer>false</organismsDiffer>
    <experiments>15</experiments>
</comment>
<comment type="interaction">
    <interactant intactId="EBI-10197617">
        <id>P11686</id>
    </interactant>
    <interactant intactId="EBI-12345267">
        <id>O15393-2</id>
        <label>TMPRSS2</label>
    </interactant>
    <organismsDiffer>false</organismsDiffer>
    <experiments>3</experiments>
</comment>
<comment type="interaction">
    <interactant intactId="EBI-16143688">
        <id>P11686-1</id>
    </interactant>
    <interactant intactId="EBI-821758">
        <id>PRO_0000000092</id>
        <label>APP</label>
        <dbReference type="UniProtKB" id="P05067"/>
    </interactant>
    <organismsDiffer>false</organismsDiffer>
    <experiments>5</experiments>
</comment>
<comment type="interaction">
    <interactant intactId="EBI-16435005">
        <id>P11686-2</id>
    </interactant>
    <interactant intactId="EBI-8649725">
        <id>Q9BSE2</id>
        <label>TMEM79</label>
    </interactant>
    <organismsDiffer>false</organismsDiffer>
    <experiments>3</experiments>
</comment>
<comment type="subcellular location">
    <subcellularLocation>
        <location>Secreted</location>
        <location>Extracellular space</location>
        <location>Surface film</location>
    </subcellularLocation>
</comment>
<comment type="alternative products">
    <event type="alternative splicing"/>
    <isoform>
        <id>P11686-1</id>
        <name>1</name>
        <sequence type="displayed"/>
    </isoform>
    <isoform>
        <id>P11686-2</id>
        <name>2</name>
        <name>C1</name>
        <sequence type="described" ref="VSP_006311"/>
    </isoform>
</comment>
<comment type="disease" evidence="2 4 5 7 8 9">
    <disease id="DI-00961">
        <name>Pulmonary surfactant metabolism dysfunction 2</name>
        <acronym>SMDP2</acronym>
        <description>A rare disease associated with progressive respiratory insufficiency and lung disease with a variable clinical course, due to impaired surfactant homeostasis. It is characterized by alveolar filling with floccular material that stains positive using the periodic acid-Schiff method and is derived from surfactant phospholipids and protein components. Excessive lipoproteins accumulation in the alveoli results in severe respiratory distress.</description>
        <dbReference type="MIM" id="610913"/>
    </disease>
    <text>The disease is caused by variants affecting the gene represented in this entry.</text>
</comment>
<comment type="miscellaneous">
    <text>Pulmonary surfactant consists of 90% lipid and 10% protein. There are 4 surfactant-associated proteins: 2 collagenous, carbohydrate-binding glycoproteins (SP-A and SP-D) and 2 small hydrophobic proteins (SP-B and SP-C).</text>
</comment>
<protein>
    <recommendedName>
        <fullName evidence="19">Surfactant protein C</fullName>
        <shortName>SP-C</shortName>
    </recommendedName>
    <alternativeName>
        <fullName>Pulmonary surfactant-associated protein C</fullName>
    </alternativeName>
    <alternativeName>
        <fullName>Pulmonary surfactant-associated proteolipid SPL(Val)</fullName>
    </alternativeName>
    <alternativeName>
        <fullName>SP5</fullName>
    </alternativeName>
</protein>
<name>PSPC_HUMAN</name>
<keyword id="KW-0002">3D-structure</keyword>
<keyword id="KW-0025">Alternative splicing</keyword>
<keyword id="KW-0903">Direct protein sequencing</keyword>
<keyword id="KW-0225">Disease variant</keyword>
<keyword id="KW-1015">Disulfide bond</keyword>
<keyword id="KW-0305">Gaseous exchange</keyword>
<keyword id="KW-0449">Lipoprotein</keyword>
<keyword id="KW-0564">Palmitate</keyword>
<keyword id="KW-1267">Proteomics identification</keyword>
<keyword id="KW-1185">Reference proteome</keyword>
<keyword id="KW-0964">Secreted</keyword>
<keyword id="KW-0767">Surface film</keyword>
<gene>
    <name evidence="19" type="primary">SFTPC</name>
    <name type="synonym">SFTP2</name>
</gene>
<evidence type="ECO:0000255" key="1">
    <source>
        <dbReference type="PROSITE-ProRule" id="PRU00255"/>
    </source>
</evidence>
<evidence type="ECO:0000269" key="2">
    <source>
    </source>
</evidence>
<evidence type="ECO:0000269" key="3">
    <source>
    </source>
</evidence>
<evidence type="ECO:0000269" key="4">
    <source>
    </source>
</evidence>
<evidence type="ECO:0000269" key="5">
    <source>
    </source>
</evidence>
<evidence type="ECO:0000269" key="6">
    <source>
    </source>
</evidence>
<evidence type="ECO:0000269" key="7">
    <source>
    </source>
</evidence>
<evidence type="ECO:0000269" key="8">
    <source>
    </source>
</evidence>
<evidence type="ECO:0000269" key="9">
    <source>
    </source>
</evidence>
<evidence type="ECO:0000269" key="10">
    <source>
    </source>
</evidence>
<evidence type="ECO:0000269" key="11">
    <source>
    </source>
</evidence>
<evidence type="ECO:0000269" key="12">
    <source>
    </source>
</evidence>
<evidence type="ECO:0000269" key="13">
    <source>
    </source>
</evidence>
<evidence type="ECO:0000269" key="14">
    <source>
    </source>
</evidence>
<evidence type="ECO:0000269" key="15">
    <source>
    </source>
</evidence>
<evidence type="ECO:0000269" key="16">
    <source ref="7"/>
</evidence>
<evidence type="ECO:0000303" key="17">
    <source ref="7"/>
</evidence>
<evidence type="ECO:0000305" key="18"/>
<evidence type="ECO:0000312" key="19">
    <source>
        <dbReference type="HGNC" id="HGNC:10802"/>
    </source>
</evidence>
<evidence type="ECO:0007829" key="20">
    <source>
        <dbReference type="PDB" id="2YAD"/>
    </source>
</evidence>
<evidence type="ECO:0007829" key="21">
    <source>
        <dbReference type="PDB" id="8OVI"/>
    </source>
</evidence>
<evidence type="ECO:0007829" key="22">
    <source>
        <dbReference type="PDB" id="8OX2"/>
    </source>
</evidence>
<proteinExistence type="evidence at protein level"/>
<dbReference type="EMBL" id="J03553">
    <property type="protein sequence ID" value="AAA36631.1"/>
    <property type="molecule type" value="mRNA"/>
</dbReference>
<dbReference type="EMBL" id="J03517">
    <property type="protein sequence ID" value="AAA36634.1"/>
    <property type="molecule type" value="mRNA"/>
</dbReference>
<dbReference type="EMBL" id="J03890">
    <property type="protein sequence ID" value="AAC32022.1"/>
    <property type="molecule type" value="Genomic_DNA"/>
</dbReference>
<dbReference type="EMBL" id="J03890">
    <property type="protein sequence ID" value="AAC32023.1"/>
    <property type="molecule type" value="Genomic_DNA"/>
</dbReference>
<dbReference type="EMBL" id="U02948">
    <property type="protein sequence ID" value="AAB60332.1"/>
    <property type="molecule type" value="Genomic_DNA"/>
</dbReference>
<dbReference type="EMBL" id="AY357924">
    <property type="protein sequence ID" value="AAQ67734.1"/>
    <property type="molecule type" value="Genomic_DNA"/>
</dbReference>
<dbReference type="EMBL" id="AK315742">
    <property type="protein sequence ID" value="BAG38097.1"/>
    <property type="molecule type" value="mRNA"/>
</dbReference>
<dbReference type="EMBL" id="DQ884411">
    <property type="protein sequence ID" value="ABI63378.1"/>
    <property type="molecule type" value="mRNA"/>
</dbReference>
<dbReference type="EMBL" id="KU178330">
    <property type="protein sequence ID" value="ALQ33788.1"/>
    <property type="molecule type" value="mRNA"/>
</dbReference>
<dbReference type="EMBL" id="AY337315">
    <property type="protein sequence ID" value="AAP88034.1"/>
    <property type="molecule type" value="Genomic_DNA"/>
</dbReference>
<dbReference type="EMBL" id="AC105206">
    <property type="status" value="NOT_ANNOTATED_CDS"/>
    <property type="molecule type" value="Genomic_DNA"/>
</dbReference>
<dbReference type="EMBL" id="CH471080">
    <property type="protein sequence ID" value="EAW63707.1"/>
    <property type="molecule type" value="Genomic_DNA"/>
</dbReference>
<dbReference type="EMBL" id="BC005913">
    <property type="protein sequence ID" value="AAH05913.1"/>
    <property type="molecule type" value="mRNA"/>
</dbReference>
<dbReference type="CCDS" id="CCDS43722.1">
    <molecule id="P11686-1"/>
</dbReference>
<dbReference type="CCDS" id="CCDS55209.1">
    <molecule id="P11686-2"/>
</dbReference>
<dbReference type="PIR" id="A28801">
    <property type="entry name" value="LNHUC"/>
</dbReference>
<dbReference type="RefSeq" id="NP_001165828.1">
    <molecule id="P11686-2"/>
    <property type="nucleotide sequence ID" value="NM_001172357.2"/>
</dbReference>
<dbReference type="RefSeq" id="NP_001165881.1">
    <molecule id="P11686-1"/>
    <property type="nucleotide sequence ID" value="NM_001172410.2"/>
</dbReference>
<dbReference type="RefSeq" id="NP_001304707.1">
    <molecule id="P11686-2"/>
    <property type="nucleotide sequence ID" value="NM_001317778.2"/>
</dbReference>
<dbReference type="RefSeq" id="NP_001304708.1">
    <property type="nucleotide sequence ID" value="NM_001317779.1"/>
</dbReference>
<dbReference type="RefSeq" id="NP_001304709.1">
    <molecule id="P11686-2"/>
    <property type="nucleotide sequence ID" value="NM_001317780.2"/>
</dbReference>
<dbReference type="RefSeq" id="NP_001372582.1">
    <molecule id="P11686-1"/>
    <property type="nucleotide sequence ID" value="NM_001385653.1"/>
</dbReference>
<dbReference type="RefSeq" id="NP_001372583.1">
    <molecule id="P11686-1"/>
    <property type="nucleotide sequence ID" value="NM_001385654.1"/>
</dbReference>
<dbReference type="RefSeq" id="NP_001372584.1">
    <molecule id="P11686-1"/>
    <property type="nucleotide sequence ID" value="NM_001385655.1"/>
</dbReference>
<dbReference type="RefSeq" id="NP_001372585.1">
    <molecule id="P11686-2"/>
    <property type="nucleotide sequence ID" value="NM_001385656.1"/>
</dbReference>
<dbReference type="RefSeq" id="NP_001372586.1">
    <molecule id="P11686-2"/>
    <property type="nucleotide sequence ID" value="NM_001385657.1"/>
</dbReference>
<dbReference type="RefSeq" id="NP_001372587.1">
    <molecule id="P11686-2"/>
    <property type="nucleotide sequence ID" value="NM_001385658.1"/>
</dbReference>
<dbReference type="RefSeq" id="NP_001372588.1">
    <molecule id="P11686-2"/>
    <property type="nucleotide sequence ID" value="NM_001385659.1"/>
</dbReference>
<dbReference type="RefSeq" id="NP_003009.2">
    <molecule id="P11686-1"/>
    <property type="nucleotide sequence ID" value="NM_003018.4"/>
</dbReference>
<dbReference type="PDB" id="2YAD">
    <property type="method" value="X-ray"/>
    <property type="resolution" value="2.20 A"/>
    <property type="chains" value="A/B/C/D/E/F=59-197"/>
</dbReference>
<dbReference type="PDB" id="8OVI">
    <property type="method" value="NMR"/>
    <property type="chains" value="A=85-197"/>
</dbReference>
<dbReference type="PDB" id="8OX2">
    <property type="method" value="NMR"/>
    <property type="chains" value="A/B/C=85-197"/>
</dbReference>
<dbReference type="PDBsum" id="2YAD"/>
<dbReference type="PDBsum" id="8OVI"/>
<dbReference type="PDBsum" id="8OX2"/>
<dbReference type="SMR" id="P11686"/>
<dbReference type="BioGRID" id="112338">
    <property type="interactions" value="242"/>
</dbReference>
<dbReference type="DIP" id="DIP-61551N"/>
<dbReference type="FunCoup" id="P11686">
    <property type="interactions" value="65"/>
</dbReference>
<dbReference type="IntAct" id="P11686">
    <property type="interactions" value="215"/>
</dbReference>
<dbReference type="STRING" id="9606.ENSP00000316152"/>
<dbReference type="iPTMnet" id="P11686"/>
<dbReference type="PhosphoSitePlus" id="P11686"/>
<dbReference type="SwissPalm" id="P11686"/>
<dbReference type="BioMuta" id="SFTPC"/>
<dbReference type="DMDM" id="131425"/>
<dbReference type="MassIVE" id="P11686"/>
<dbReference type="PaxDb" id="9606-ENSP00000316152"/>
<dbReference type="PeptideAtlas" id="P11686"/>
<dbReference type="ProteomicsDB" id="20411"/>
<dbReference type="ProteomicsDB" id="52799">
    <molecule id="P11686-1"/>
</dbReference>
<dbReference type="ProteomicsDB" id="52800">
    <molecule id="P11686-2"/>
</dbReference>
<dbReference type="Antibodypedia" id="3986">
    <property type="antibodies" value="421 antibodies from 35 providers"/>
</dbReference>
<dbReference type="DNASU" id="6440"/>
<dbReference type="Ensembl" id="ENST00000318561.7">
    <molecule id="P11686-1"/>
    <property type="protein sequence ID" value="ENSP00000316152.3"/>
    <property type="gene ID" value="ENSG00000168484.13"/>
</dbReference>
<dbReference type="Ensembl" id="ENST00000521315.5">
    <molecule id="P11686-2"/>
    <property type="protein sequence ID" value="ENSP00000430410.1"/>
    <property type="gene ID" value="ENSG00000168484.13"/>
</dbReference>
<dbReference type="Ensembl" id="ENST00000679463.1">
    <molecule id="P11686-2"/>
    <property type="protein sequence ID" value="ENSP00000505152.1"/>
    <property type="gene ID" value="ENSG00000168484.13"/>
</dbReference>
<dbReference type="GeneID" id="6440"/>
<dbReference type="KEGG" id="hsa:6440"/>
<dbReference type="MANE-Select" id="ENST00000679463.1">
    <molecule id="P11686-2"/>
    <property type="protein sequence ID" value="ENSP00000505152.1"/>
    <property type="RefSeq nucleotide sequence ID" value="NM_001317778.2"/>
    <property type="RefSeq protein sequence ID" value="NP_001304707.1"/>
</dbReference>
<dbReference type="UCSC" id="uc003xax.5">
    <molecule id="P11686-1"/>
    <property type="organism name" value="human"/>
</dbReference>
<dbReference type="AGR" id="HGNC:10802"/>
<dbReference type="CTD" id="6440"/>
<dbReference type="DisGeNET" id="6440"/>
<dbReference type="GeneCards" id="SFTPC"/>
<dbReference type="GeneReviews" id="SFTPC"/>
<dbReference type="HGNC" id="HGNC:10802">
    <property type="gene designation" value="SFTPC"/>
</dbReference>
<dbReference type="HPA" id="ENSG00000168484">
    <property type="expression patterns" value="Tissue enriched (lung)"/>
</dbReference>
<dbReference type="MalaCards" id="SFTPC"/>
<dbReference type="MIM" id="178620">
    <property type="type" value="gene"/>
</dbReference>
<dbReference type="MIM" id="610913">
    <property type="type" value="phenotype"/>
</dbReference>
<dbReference type="neXtProt" id="NX_P11686"/>
<dbReference type="OpenTargets" id="ENSG00000168484"/>
<dbReference type="Orphanet" id="217566">
    <property type="disease" value="Chronic respiratory distress with surfactant metabolism deficiency"/>
</dbReference>
<dbReference type="Orphanet" id="2032">
    <property type="disease" value="Idiopathic pulmonary fibrosis"/>
</dbReference>
<dbReference type="Orphanet" id="440392">
    <property type="disease" value="Interstitial lung disease due to SP-C deficiency"/>
</dbReference>
<dbReference type="Orphanet" id="685082">
    <property type="disease" value="Pediatric acute respiratory distress syndrome"/>
</dbReference>
<dbReference type="PharmGKB" id="PA35714"/>
<dbReference type="VEuPathDB" id="HostDB:ENSG00000168484"/>
<dbReference type="eggNOG" id="ENOG502S6QH">
    <property type="taxonomic scope" value="Eukaryota"/>
</dbReference>
<dbReference type="GeneTree" id="ENSGT00390000017162"/>
<dbReference type="InParanoid" id="P11686"/>
<dbReference type="OMA" id="WRHRACY"/>
<dbReference type="OrthoDB" id="9888901at2759"/>
<dbReference type="PAN-GO" id="P11686">
    <property type="GO annotations" value="2 GO annotations based on evolutionary models"/>
</dbReference>
<dbReference type="PhylomeDB" id="P11686"/>
<dbReference type="TreeFam" id="TF337317"/>
<dbReference type="PathwayCommons" id="P11686"/>
<dbReference type="Reactome" id="R-HSA-5683826">
    <property type="pathway name" value="Surfactant metabolism"/>
</dbReference>
<dbReference type="Reactome" id="R-HSA-5688354">
    <property type="pathway name" value="Defective pro-SFTPC causes SMDP2 and RDS"/>
</dbReference>
<dbReference type="Reactome" id="R-HSA-5688849">
    <property type="pathway name" value="Defective CSF2RB causes SMDP5"/>
</dbReference>
<dbReference type="Reactome" id="R-HSA-5688890">
    <property type="pathway name" value="Defective CSF2RA causes SMDP4"/>
</dbReference>
<dbReference type="SignaLink" id="P11686"/>
<dbReference type="SIGNOR" id="P11686"/>
<dbReference type="BioGRID-ORCS" id="6440">
    <property type="hits" value="6 hits in 1141 CRISPR screens"/>
</dbReference>
<dbReference type="ChiTaRS" id="SFTPC">
    <property type="organism name" value="human"/>
</dbReference>
<dbReference type="EvolutionaryTrace" id="P11686"/>
<dbReference type="GeneWiki" id="Pulmonary_surfactant-associated_protein_C"/>
<dbReference type="GenomeRNAi" id="6440"/>
<dbReference type="Pharos" id="P11686">
    <property type="development level" value="Tbio"/>
</dbReference>
<dbReference type="PRO" id="PR:P11686"/>
<dbReference type="Proteomes" id="UP000005640">
    <property type="component" value="Chromosome 8"/>
</dbReference>
<dbReference type="RNAct" id="P11686">
    <property type="molecule type" value="protein"/>
</dbReference>
<dbReference type="Bgee" id="ENSG00000168484">
    <property type="expression patterns" value="Expressed in lower lobe of lung and 160 other cell types or tissues"/>
</dbReference>
<dbReference type="ExpressionAtlas" id="P11686">
    <property type="expression patterns" value="baseline and differential"/>
</dbReference>
<dbReference type="GO" id="GO:0097208">
    <property type="term" value="C:alveolar lamellar body"/>
    <property type="evidence" value="ECO:0000318"/>
    <property type="project" value="GO_Central"/>
</dbReference>
<dbReference type="GO" id="GO:0045334">
    <property type="term" value="C:clathrin-coated endocytic vesicle"/>
    <property type="evidence" value="ECO:0000304"/>
    <property type="project" value="Reactome"/>
</dbReference>
<dbReference type="GO" id="GO:0005789">
    <property type="term" value="C:endoplasmic reticulum membrane"/>
    <property type="evidence" value="ECO:0000304"/>
    <property type="project" value="Reactome"/>
</dbReference>
<dbReference type="GO" id="GO:0005576">
    <property type="term" value="C:extracellular region"/>
    <property type="evidence" value="ECO:0000304"/>
    <property type="project" value="Reactome"/>
</dbReference>
<dbReference type="GO" id="GO:0005615">
    <property type="term" value="C:extracellular space"/>
    <property type="evidence" value="ECO:0000318"/>
    <property type="project" value="GO_Central"/>
</dbReference>
<dbReference type="GO" id="GO:0042599">
    <property type="term" value="C:lamellar body"/>
    <property type="evidence" value="ECO:0000304"/>
    <property type="project" value="Reactome"/>
</dbReference>
<dbReference type="GO" id="GO:0097486">
    <property type="term" value="C:multivesicular body lumen"/>
    <property type="evidence" value="ECO:0000304"/>
    <property type="project" value="Reactome"/>
</dbReference>
<dbReference type="GO" id="GO:0042802">
    <property type="term" value="F:identical protein binding"/>
    <property type="evidence" value="ECO:0000353"/>
    <property type="project" value="IntAct"/>
</dbReference>
<dbReference type="GO" id="GO:0007585">
    <property type="term" value="P:respiratory gaseous exchange by respiratory system"/>
    <property type="evidence" value="ECO:0007669"/>
    <property type="project" value="UniProtKB-KW"/>
</dbReference>
<dbReference type="FunFam" id="3.30.390.150:FF:000006">
    <property type="entry name" value="Pulmonary surfactant-associated protein C"/>
    <property type="match status" value="1"/>
</dbReference>
<dbReference type="Gene3D" id="3.30.390.150">
    <property type="match status" value="1"/>
</dbReference>
<dbReference type="InterPro" id="IPR007084">
    <property type="entry name" value="BRICHOS_dom"/>
</dbReference>
<dbReference type="InterPro" id="IPR001729">
    <property type="entry name" value="SP-C"/>
</dbReference>
<dbReference type="InterPro" id="IPR018051">
    <property type="entry name" value="SP-C_palmitoylation_site"/>
</dbReference>
<dbReference type="InterPro" id="IPR015091">
    <property type="entry name" value="Surfactant_protein_propep"/>
</dbReference>
<dbReference type="PANTHER" id="PTHR10800">
    <property type="entry name" value="PULMONARY SURFACTANT-ASSOCIATED PROTEIN C"/>
    <property type="match status" value="1"/>
</dbReference>
<dbReference type="PANTHER" id="PTHR10800:SF4">
    <property type="entry name" value="PULMONARY SURFACTANT-ASSOCIATED PROTEIN C"/>
    <property type="match status" value="1"/>
</dbReference>
<dbReference type="Pfam" id="PF04089">
    <property type="entry name" value="BRICHOS"/>
    <property type="match status" value="1"/>
</dbReference>
<dbReference type="Pfam" id="PF08999">
    <property type="entry name" value="SP_C-Propep"/>
    <property type="match status" value="1"/>
</dbReference>
<dbReference type="SMART" id="SM01039">
    <property type="entry name" value="BRICHOS"/>
    <property type="match status" value="1"/>
</dbReference>
<dbReference type="SMART" id="SM00019">
    <property type="entry name" value="SF_P"/>
    <property type="match status" value="1"/>
</dbReference>
<dbReference type="PROSITE" id="PS50869">
    <property type="entry name" value="BRICHOS"/>
    <property type="match status" value="1"/>
</dbReference>
<dbReference type="PROSITE" id="PS00341">
    <property type="entry name" value="SURFACT_PALMITOYL"/>
    <property type="match status" value="1"/>
</dbReference>
<reference key="1">
    <citation type="journal article" date="1987" name="Proc. Natl. Acad. Sci. U.S.A.">
        <title>Low molecular weight human pulmonary surfactant protein (SP5): isolation, characterization, and cDNA and amino acid sequences.</title>
        <authorList>
            <person name="Warr R.G."/>
            <person name="Hawgood S."/>
            <person name="Buckley D.I."/>
            <person name="Crisp T.M."/>
            <person name="Schilling J."/>
            <person name="Benson B.J."/>
            <person name="Ballard P.L."/>
            <person name="Clements J.A."/>
            <person name="White R.T."/>
        </authorList>
    </citation>
    <scope>NUCLEOTIDE SEQUENCE [MRNA] (ISOFORM 1)</scope>
    <scope>VARIANTS ASN-138 AND ASN-186</scope>
</reference>
<reference key="2">
    <citation type="journal article" date="1988" name="J. Biol. Chem.">
        <title>cDNA, deduced polypeptide structure and chromosomal assignment of human pulmonary surfactant proteolipid, SPL(pVal).</title>
        <authorList>
            <person name="Glasser S.W."/>
            <person name="Korfhagen T.R."/>
            <person name="Weaver T.E."/>
            <person name="Clark J.C."/>
            <person name="Pilot-Matias T."/>
            <person name="Meuth J."/>
            <person name="Fox J.L."/>
            <person name="Whitsett J.A."/>
        </authorList>
    </citation>
    <scope>NUCLEOTIDE SEQUENCE [MRNA] (ISOFORM 1)</scope>
    <scope>PROTEIN SEQUENCE OF 26-42</scope>
    <scope>VARIANTS ASN-138 AND ASN-186</scope>
</reference>
<reference key="3">
    <citation type="journal article" date="1988" name="J. Biol. Chem.">
        <title>Two SP-C genes encoding human pulmonary surfactant proteolipid.</title>
        <authorList>
            <person name="Glasser S.W."/>
            <person name="Korfhagen T.R."/>
            <person name="Perme C.M."/>
            <person name="Pilot-Matias T.J."/>
            <person name="Kister S.E."/>
            <person name="Whitsett J.A."/>
        </authorList>
    </citation>
    <scope>NUCLEOTIDE SEQUENCE [GENOMIC DNA]</scope>
    <scope>ALTERNATIVE SPLICING</scope>
    <scope>VARIANT ASN-186</scope>
</reference>
<reference key="4">
    <citation type="journal article" date="1994" name="Exp. Lung Res.">
        <title>Human surfactant protein-C: genetic homogeneity and expression in RDS; comparison with other species.</title>
        <authorList>
            <person name="Hatzis D."/>
            <person name="Deiter G."/>
            <person name="deMello D.E."/>
            <person name="Floros J."/>
        </authorList>
    </citation>
    <scope>NUCLEOTIDE SEQUENCE [GENOMIC DNA] (ISOFORM 1)</scope>
</reference>
<reference key="5">
    <citation type="submission" date="2003-08" db="EMBL/GenBank/DDBJ databases">
        <authorList>
            <person name="Frerking I."/>
            <person name="Stevens P."/>
            <person name="Pison U."/>
            <person name="Witt H."/>
        </authorList>
    </citation>
    <scope>NUCLEOTIDE SEQUENCE [GENOMIC DNA] (ISOFORM 1)</scope>
</reference>
<reference key="6">
    <citation type="journal article" date="2004" name="Nat. Genet.">
        <title>Complete sequencing and characterization of 21,243 full-length human cDNAs.</title>
        <authorList>
            <person name="Ota T."/>
            <person name="Suzuki Y."/>
            <person name="Nishikawa T."/>
            <person name="Otsuki T."/>
            <person name="Sugiyama T."/>
            <person name="Irie R."/>
            <person name="Wakamatsu A."/>
            <person name="Hayashi K."/>
            <person name="Sato H."/>
            <person name="Nagai K."/>
            <person name="Kimura K."/>
            <person name="Makita H."/>
            <person name="Sekine M."/>
            <person name="Obayashi M."/>
            <person name="Nishi T."/>
            <person name="Shibahara T."/>
            <person name="Tanaka T."/>
            <person name="Ishii S."/>
            <person name="Yamamoto J."/>
            <person name="Saito K."/>
            <person name="Kawai Y."/>
            <person name="Isono Y."/>
            <person name="Nakamura Y."/>
            <person name="Nagahari K."/>
            <person name="Murakami K."/>
            <person name="Yasuda T."/>
            <person name="Iwayanagi T."/>
            <person name="Wagatsuma M."/>
            <person name="Shiratori A."/>
            <person name="Sudo H."/>
            <person name="Hosoiri T."/>
            <person name="Kaku Y."/>
            <person name="Kodaira H."/>
            <person name="Kondo H."/>
            <person name="Sugawara M."/>
            <person name="Takahashi M."/>
            <person name="Kanda K."/>
            <person name="Yokoi T."/>
            <person name="Furuya T."/>
            <person name="Kikkawa E."/>
            <person name="Omura Y."/>
            <person name="Abe K."/>
            <person name="Kamihara K."/>
            <person name="Katsuta N."/>
            <person name="Sato K."/>
            <person name="Tanikawa M."/>
            <person name="Yamazaki M."/>
            <person name="Ninomiya K."/>
            <person name="Ishibashi T."/>
            <person name="Yamashita H."/>
            <person name="Murakawa K."/>
            <person name="Fujimori K."/>
            <person name="Tanai H."/>
            <person name="Kimata M."/>
            <person name="Watanabe M."/>
            <person name="Hiraoka S."/>
            <person name="Chiba Y."/>
            <person name="Ishida S."/>
            <person name="Ono Y."/>
            <person name="Takiguchi S."/>
            <person name="Watanabe S."/>
            <person name="Yosida M."/>
            <person name="Hotuta T."/>
            <person name="Kusano J."/>
            <person name="Kanehori K."/>
            <person name="Takahashi-Fujii A."/>
            <person name="Hara H."/>
            <person name="Tanase T.-O."/>
            <person name="Nomura Y."/>
            <person name="Togiya S."/>
            <person name="Komai F."/>
            <person name="Hara R."/>
            <person name="Takeuchi K."/>
            <person name="Arita M."/>
            <person name="Imose N."/>
            <person name="Musashino K."/>
            <person name="Yuuki H."/>
            <person name="Oshima A."/>
            <person name="Sasaki N."/>
            <person name="Aotsuka S."/>
            <person name="Yoshikawa Y."/>
            <person name="Matsunawa H."/>
            <person name="Ichihara T."/>
            <person name="Shiohata N."/>
            <person name="Sano S."/>
            <person name="Moriya S."/>
            <person name="Momiyama H."/>
            <person name="Satoh N."/>
            <person name="Takami S."/>
            <person name="Terashima Y."/>
            <person name="Suzuki O."/>
            <person name="Nakagawa S."/>
            <person name="Senoh A."/>
            <person name="Mizoguchi H."/>
            <person name="Goto Y."/>
            <person name="Shimizu F."/>
            <person name="Wakebe H."/>
            <person name="Hishigaki H."/>
            <person name="Watanabe T."/>
            <person name="Sugiyama A."/>
            <person name="Takemoto M."/>
            <person name="Kawakami B."/>
            <person name="Yamazaki M."/>
            <person name="Watanabe K."/>
            <person name="Kumagai A."/>
            <person name="Itakura S."/>
            <person name="Fukuzumi Y."/>
            <person name="Fujimori Y."/>
            <person name="Komiyama M."/>
            <person name="Tashiro H."/>
            <person name="Tanigami A."/>
            <person name="Fujiwara T."/>
            <person name="Ono T."/>
            <person name="Yamada K."/>
            <person name="Fujii Y."/>
            <person name="Ozaki K."/>
            <person name="Hirao M."/>
            <person name="Ohmori Y."/>
            <person name="Kawabata A."/>
            <person name="Hikiji T."/>
            <person name="Kobatake N."/>
            <person name="Inagaki H."/>
            <person name="Ikema Y."/>
            <person name="Okamoto S."/>
            <person name="Okitani R."/>
            <person name="Kawakami T."/>
            <person name="Noguchi S."/>
            <person name="Itoh T."/>
            <person name="Shigeta K."/>
            <person name="Senba T."/>
            <person name="Matsumura K."/>
            <person name="Nakajima Y."/>
            <person name="Mizuno T."/>
            <person name="Morinaga M."/>
            <person name="Sasaki M."/>
            <person name="Togashi T."/>
            <person name="Oyama M."/>
            <person name="Hata H."/>
            <person name="Watanabe M."/>
            <person name="Komatsu T."/>
            <person name="Mizushima-Sugano J."/>
            <person name="Satoh T."/>
            <person name="Shirai Y."/>
            <person name="Takahashi Y."/>
            <person name="Nakagawa K."/>
            <person name="Okumura K."/>
            <person name="Nagase T."/>
            <person name="Nomura N."/>
            <person name="Kikuchi H."/>
            <person name="Masuho Y."/>
            <person name="Yamashita R."/>
            <person name="Nakai K."/>
            <person name="Yada T."/>
            <person name="Nakamura Y."/>
            <person name="Ohara O."/>
            <person name="Isogai T."/>
            <person name="Sugano S."/>
        </authorList>
    </citation>
    <scope>NUCLEOTIDE SEQUENCE [LARGE SCALE MRNA] (ISOFORM 1)</scope>
    <source>
        <tissue>Lung</tissue>
    </source>
</reference>
<reference key="7">
    <citation type="submission" date="2006-07" db="EMBL/GenBank/DDBJ databases">
        <title>A computer system platform used to predict novel genes.</title>
        <authorList>
            <person name="Yu Z."/>
            <person name="Zheng Z."/>
            <person name="Tang T."/>
            <person name="Fu Y."/>
        </authorList>
    </citation>
    <scope>NUCLEOTIDE SEQUENCE [LARGE SCALE MRNA] (ISOFORM 2)</scope>
    <scope>VARIANTS ASN-138 AND ASN-186</scope>
</reference>
<reference key="8">
    <citation type="journal article" date="2016" name="Cell">
        <title>Widespread Expansion of Protein Interaction Capabilities by Alternative Splicing.</title>
        <authorList>
            <person name="Yang X."/>
            <person name="Coulombe-Huntington J."/>
            <person name="Kang S."/>
            <person name="Sheynkman G.M."/>
            <person name="Hao T."/>
            <person name="Richardson A."/>
            <person name="Sun S."/>
            <person name="Yang F."/>
            <person name="Shen Y.A."/>
            <person name="Murray R."/>
            <person name="Spirohn K."/>
            <person name="Begg B.E."/>
            <person name="Duran-Frigola M."/>
            <person name="MacWilliams A."/>
            <person name="Pevzner S.J."/>
            <person name="Zhong Q."/>
            <person name="Trigg S.A."/>
            <person name="Tam S."/>
            <person name="Ghamsari L."/>
            <person name="Sahni N."/>
            <person name="Yi S."/>
            <person name="Rodriguez M.D."/>
            <person name="Balcha D."/>
            <person name="Tan G."/>
            <person name="Costanzo M."/>
            <person name="Andrews B."/>
            <person name="Boone C."/>
            <person name="Zhou X.J."/>
            <person name="Salehi-Ashtiani K."/>
            <person name="Charloteaux B."/>
            <person name="Chen A."/>
            <person name="Calderwood M.A."/>
            <person name="Aloy P."/>
            <person name="Roth F.P."/>
            <person name="Hill D.E."/>
            <person name="Iakoucheva L.M."/>
            <person name="Xia Y."/>
            <person name="Vidal M."/>
        </authorList>
    </citation>
    <scope>NUCLEOTIDE SEQUENCE [LARGE SCALE MRNA] (ISOFORM 2)</scope>
</reference>
<reference key="9">
    <citation type="submission" date="2003-07" db="EMBL/GenBank/DDBJ databases">
        <authorList>
            <consortium name="SeattleSNPs variation discovery resource"/>
        </authorList>
    </citation>
    <scope>NUCLEOTIDE SEQUENCE [GENOMIC DNA]</scope>
</reference>
<reference key="10">
    <citation type="journal article" date="2006" name="Nature">
        <title>DNA sequence and analysis of human chromosome 8.</title>
        <authorList>
            <person name="Nusbaum C."/>
            <person name="Mikkelsen T.S."/>
            <person name="Zody M.C."/>
            <person name="Asakawa S."/>
            <person name="Taudien S."/>
            <person name="Garber M."/>
            <person name="Kodira C.D."/>
            <person name="Schueler M.G."/>
            <person name="Shimizu A."/>
            <person name="Whittaker C.A."/>
            <person name="Chang J.L."/>
            <person name="Cuomo C.A."/>
            <person name="Dewar K."/>
            <person name="FitzGerald M.G."/>
            <person name="Yang X."/>
            <person name="Allen N.R."/>
            <person name="Anderson S."/>
            <person name="Asakawa T."/>
            <person name="Blechschmidt K."/>
            <person name="Bloom T."/>
            <person name="Borowsky M.L."/>
            <person name="Butler J."/>
            <person name="Cook A."/>
            <person name="Corum B."/>
            <person name="DeArellano K."/>
            <person name="DeCaprio D."/>
            <person name="Dooley K.T."/>
            <person name="Dorris L. III"/>
            <person name="Engels R."/>
            <person name="Gloeckner G."/>
            <person name="Hafez N."/>
            <person name="Hagopian D.S."/>
            <person name="Hall J.L."/>
            <person name="Ishikawa S.K."/>
            <person name="Jaffe D.B."/>
            <person name="Kamat A."/>
            <person name="Kudoh J."/>
            <person name="Lehmann R."/>
            <person name="Lokitsang T."/>
            <person name="Macdonald P."/>
            <person name="Major J.E."/>
            <person name="Matthews C.D."/>
            <person name="Mauceli E."/>
            <person name="Menzel U."/>
            <person name="Mihalev A.H."/>
            <person name="Minoshima S."/>
            <person name="Murayama Y."/>
            <person name="Naylor J.W."/>
            <person name="Nicol R."/>
            <person name="Nguyen C."/>
            <person name="O'Leary S.B."/>
            <person name="O'Neill K."/>
            <person name="Parker S.C.J."/>
            <person name="Polley A."/>
            <person name="Raymond C.K."/>
            <person name="Reichwald K."/>
            <person name="Rodriguez J."/>
            <person name="Sasaki T."/>
            <person name="Schilhabel M."/>
            <person name="Siddiqui R."/>
            <person name="Smith C.L."/>
            <person name="Sneddon T.P."/>
            <person name="Talamas J.A."/>
            <person name="Tenzin P."/>
            <person name="Topham K."/>
            <person name="Venkataraman V."/>
            <person name="Wen G."/>
            <person name="Yamazaki S."/>
            <person name="Young S.K."/>
            <person name="Zeng Q."/>
            <person name="Zimmer A.R."/>
            <person name="Rosenthal A."/>
            <person name="Birren B.W."/>
            <person name="Platzer M."/>
            <person name="Shimizu N."/>
            <person name="Lander E.S."/>
        </authorList>
    </citation>
    <scope>NUCLEOTIDE SEQUENCE [LARGE SCALE GENOMIC DNA]</scope>
</reference>
<reference key="11">
    <citation type="submission" date="2005-09" db="EMBL/GenBank/DDBJ databases">
        <authorList>
            <person name="Mural R.J."/>
            <person name="Istrail S."/>
            <person name="Sutton G.G."/>
            <person name="Florea L."/>
            <person name="Halpern A.L."/>
            <person name="Mobarry C.M."/>
            <person name="Lippert R."/>
            <person name="Walenz B."/>
            <person name="Shatkay H."/>
            <person name="Dew I."/>
            <person name="Miller J.R."/>
            <person name="Flanigan M.J."/>
            <person name="Edwards N.J."/>
            <person name="Bolanos R."/>
            <person name="Fasulo D."/>
            <person name="Halldorsson B.V."/>
            <person name="Hannenhalli S."/>
            <person name="Turner R."/>
            <person name="Yooseph S."/>
            <person name="Lu F."/>
            <person name="Nusskern D.R."/>
            <person name="Shue B.C."/>
            <person name="Zheng X.H."/>
            <person name="Zhong F."/>
            <person name="Delcher A.L."/>
            <person name="Huson D.H."/>
            <person name="Kravitz S.A."/>
            <person name="Mouchard L."/>
            <person name="Reinert K."/>
            <person name="Remington K.A."/>
            <person name="Clark A.G."/>
            <person name="Waterman M.S."/>
            <person name="Eichler E.E."/>
            <person name="Adams M.D."/>
            <person name="Hunkapiller M.W."/>
            <person name="Myers E.W."/>
            <person name="Venter J.C."/>
        </authorList>
    </citation>
    <scope>NUCLEOTIDE SEQUENCE [LARGE SCALE GENOMIC DNA]</scope>
</reference>
<reference key="12">
    <citation type="journal article" date="2004" name="Genome Res.">
        <title>The status, quality, and expansion of the NIH full-length cDNA project: the Mammalian Gene Collection (MGC).</title>
        <authorList>
            <consortium name="The MGC Project Team"/>
        </authorList>
    </citation>
    <scope>NUCLEOTIDE SEQUENCE [LARGE SCALE MRNA] (ISOFORM 1)</scope>
    <scope>VARIANTS ASN-138 AND ASN-186</scope>
    <source>
        <tissue>Lung</tissue>
    </source>
</reference>
<reference key="13">
    <citation type="journal article" date="1988" name="FEBS Lett.">
        <title>Hydrophobic 3.7 kDa surfactant polypeptide: structural characterization of the human and bovine forms.</title>
        <authorList>
            <person name="Johansson J."/>
            <person name="Joernvall H."/>
            <person name="Eklund A."/>
            <person name="Christensen N."/>
            <person name="Robertson B."/>
            <person name="Curstedt T."/>
        </authorList>
    </citation>
    <scope>PROTEIN SEQUENCE OF 24-58</scope>
</reference>
<reference key="14">
    <citation type="journal article" date="1990" name="Proc. Natl. Acad. Sci. U.S.A.">
        <title>Hydrophobic surfactant-associated polypeptides: SP-C is a lipopeptide with two palmitoylated cysteine residues, whereas SP-B lacks covalently linked fatty acyl groups.</title>
        <authorList>
            <person name="Curstedt T."/>
            <person name="Johansson J."/>
            <person name="Persson P."/>
            <person name="Eklund A."/>
            <person name="Robertson B."/>
            <person name="Loewenadler B."/>
            <person name="Joernvall H."/>
        </authorList>
    </citation>
    <scope>PALMITOYLATION AT CYS-28 AND CYS-29</scope>
</reference>
<reference key="15">
    <citation type="journal article" date="2012" name="Proc. Natl. Acad. Sci. U.S.A.">
        <title>High-resolution structure of a BRICHOS domain and its implications for anti-amyloid chaperone activity on lung surfactant protein C.</title>
        <authorList>
            <person name="Willander H."/>
            <person name="Askarieh G."/>
            <person name="Landreh M."/>
            <person name="Westermark P."/>
            <person name="Nordling K."/>
            <person name="Keranen H."/>
            <person name="Hermansson E."/>
            <person name="Hamvas A."/>
            <person name="Nogee L.M."/>
            <person name="Bergman T."/>
            <person name="Saenz A."/>
            <person name="Casals C."/>
            <person name="Aqvistg J."/>
            <person name="Jornvall H."/>
            <person name="Berglund H."/>
            <person name="Presto J."/>
            <person name="Knight S.D."/>
            <person name="Johansson J."/>
        </authorList>
    </citation>
    <scope>X-RAY CRYSTALLOGRAPHY (2.2 ANGSTROMS) OF 59-197</scope>
    <scope>DISULFIDE BONDS</scope>
</reference>
<reference key="16">
    <citation type="journal article" date="2002" name="Am. J. Respir. Crit. Care Med.">
        <title>Heterozygosity for a surfactant protein C gene mutation associated with usual interstitial pneumonitis and cellular nonspecific interstitial pneumonitis in one kindred.</title>
        <authorList>
            <person name="Thomas A.Q."/>
            <person name="Lane K."/>
            <person name="Phillips J.A. III"/>
            <person name="Prince M."/>
            <person name="Markin C."/>
            <person name="Speer M."/>
            <person name="Schwartz D.A."/>
            <person name="Gaddipati R."/>
            <person name="Marney A."/>
            <person name="Johnson J."/>
            <person name="Roberts R."/>
            <person name="Haines J."/>
            <person name="Stahlman M."/>
            <person name="Loyd J.E."/>
        </authorList>
    </citation>
    <scope>VARIANT SMDP2 GLN-188</scope>
</reference>
<reference key="17">
    <citation type="journal article" date="2004" name="Am. J. Med. Genet. A">
        <title>Mutation of SFTPC in infantile pulmonary alveolar proteinosis with or without fibrosing lung disease.</title>
        <authorList>
            <person name="Tredano M."/>
            <person name="Griese M."/>
            <person name="Brasch F."/>
            <person name="Schumacher S."/>
            <person name="de Blic J."/>
            <person name="Marque S."/>
            <person name="Houdayer C."/>
            <person name="Elion J."/>
            <person name="Couderc R."/>
            <person name="Bahuau M."/>
        </authorList>
    </citation>
    <scope>VARIANTS SMDP2 THR-73 AND GLN-167</scope>
</reference>
<reference key="18">
    <citation type="journal article" date="2004" name="Eur. J. Hum. Genet.">
        <title>Surfactant protein C gene variation in the Finnish population -association with perinatal respiratory disease.</title>
        <authorList>
            <person name="Lahti M."/>
            <person name="Marttila R."/>
            <person name="Hallman M."/>
        </authorList>
    </citation>
    <scope>VARIANTS ASN-138 AND ASN-186</scope>
</reference>
<reference key="19">
    <citation type="journal article" date="2004" name="Eur. Respir. J.">
        <title>Interstitial lung disease in a baby with a de novo mutation in the SFTPC gene.</title>
        <authorList>
            <person name="Brasch F."/>
            <person name="Griese M."/>
            <person name="Tredano M."/>
            <person name="Johnen G."/>
            <person name="Ochs M."/>
            <person name="Rieger C."/>
            <person name="Mulugeta S."/>
            <person name="Mueller K.M."/>
            <person name="Bahuau M."/>
            <person name="Beers M.F."/>
        </authorList>
    </citation>
    <scope>VARIANT SMDP2 THR-73</scope>
    <scope>CHARACTERIZATION OF VARIANT SMDP2 THR-73</scope>
</reference>
<reference key="20">
    <citation type="journal article" date="2004" name="Eur. Respir. J.">
        <title>Variable phenotype associated with SP-C gene mutations: fatal case with the I73T mutation.</title>
        <authorList>
            <person name="Percopo S."/>
            <person name="Cameron H.S."/>
            <person name="Nogee L.M."/>
            <person name="Pettinato G."/>
            <person name="Montella S."/>
            <person name="Santamaria F."/>
        </authorList>
    </citation>
    <scope>VARIANT SMDP2 THR-73</scope>
</reference>
<reference key="21">
    <citation type="journal article" date="2005" name="N. Engl. J. Med.">
        <title>Hydroxychloroquine and surfactant protein C deficiency.</title>
        <authorList>
            <person name="Rosen D.M."/>
            <person name="Waltz D.A."/>
        </authorList>
    </citation>
    <scope>VARIANT SMDP2 ASP-116</scope>
</reference>
<reference key="22">
    <citation type="journal article" date="2005" name="Pediatr. Res.">
        <title>Nonspecific interstitial pneumonia, alveolar proteinosis, and abnormal proprotein trafficking resulting from a spontaneous mutation in the surfactant protein C gene.</title>
        <authorList>
            <person name="Stevens P.A."/>
            <person name="Pettenazzo A."/>
            <person name="Brasch F."/>
            <person name="Mulugeta S."/>
            <person name="Baritussio A."/>
            <person name="Ochs M."/>
            <person name="Morrison L."/>
            <person name="Russo S.J."/>
            <person name="Beers M.F."/>
        </authorList>
    </citation>
    <scope>VARIANT SMDP2 LYS-66</scope>
    <scope>CHARACTERIZATION OF VARIANT SMDP2 LYS-66</scope>
</reference>
<sequence length="197" mass="21013">MDVGSKEVLMESPPDYSAAPRGRFGIPCCPVHLKRLLIVVVVVVLIVVVIVGALLMGLHMSQKHTEMVLEMSIGAPEAQQRLALSEHLVTTATFSIGSTGLVVYDYQQLLIAYKPAPGTCCYIMKIAPESIPSLEALTRKVHNFQMECSLQAKPAVPTSKLGQAEGRDAGSAPSGGDPAFLGMAVSTLCGEVPLYYI</sequence>
<accession>P11686</accession>
<accession>A0A0A0MTC9</accession>
<accession>A6XNE4</accession>
<accession>B2RE00</accession>
<accession>E9PGX3</accession>
<accession>P11687</accession>
<accession>Q12793</accession>
<accession>Q7Z5D0</accession>